<reference evidence="9" key="1">
    <citation type="journal article" date="2004" name="Nature">
        <title>Genome evolution in yeasts.</title>
        <authorList>
            <person name="Dujon B."/>
            <person name="Sherman D."/>
            <person name="Fischer G."/>
            <person name="Durrens P."/>
            <person name="Casaregola S."/>
            <person name="Lafontaine I."/>
            <person name="de Montigny J."/>
            <person name="Marck C."/>
            <person name="Neuveglise C."/>
            <person name="Talla E."/>
            <person name="Goffard N."/>
            <person name="Frangeul L."/>
            <person name="Aigle M."/>
            <person name="Anthouard V."/>
            <person name="Babour A."/>
            <person name="Barbe V."/>
            <person name="Barnay S."/>
            <person name="Blanchin S."/>
            <person name="Beckerich J.-M."/>
            <person name="Beyne E."/>
            <person name="Bleykasten C."/>
            <person name="Boisrame A."/>
            <person name="Boyer J."/>
            <person name="Cattolico L."/>
            <person name="Confanioleri F."/>
            <person name="de Daruvar A."/>
            <person name="Despons L."/>
            <person name="Fabre E."/>
            <person name="Fairhead C."/>
            <person name="Ferry-Dumazet H."/>
            <person name="Groppi A."/>
            <person name="Hantraye F."/>
            <person name="Hennequin C."/>
            <person name="Jauniaux N."/>
            <person name="Joyet P."/>
            <person name="Kachouri R."/>
            <person name="Kerrest A."/>
            <person name="Koszul R."/>
            <person name="Lemaire M."/>
            <person name="Lesur I."/>
            <person name="Ma L."/>
            <person name="Muller H."/>
            <person name="Nicaud J.-M."/>
            <person name="Nikolski M."/>
            <person name="Oztas S."/>
            <person name="Ozier-Kalogeropoulos O."/>
            <person name="Pellenz S."/>
            <person name="Potier S."/>
            <person name="Richard G.-F."/>
            <person name="Straub M.-L."/>
            <person name="Suleau A."/>
            <person name="Swennen D."/>
            <person name="Tekaia F."/>
            <person name="Wesolowski-Louvel M."/>
            <person name="Westhof E."/>
            <person name="Wirth B."/>
            <person name="Zeniou-Meyer M."/>
            <person name="Zivanovic Y."/>
            <person name="Bolotin-Fukuhara M."/>
            <person name="Thierry A."/>
            <person name="Bouchier C."/>
            <person name="Caudron B."/>
            <person name="Scarpelli C."/>
            <person name="Gaillardin C."/>
            <person name="Weissenbach J."/>
            <person name="Wincker P."/>
            <person name="Souciet J.-L."/>
        </authorList>
    </citation>
    <scope>NUCLEOTIDE SEQUENCE [LARGE SCALE GENOMIC DNA]</scope>
    <source>
        <strain>CLIB 122 / E 150</strain>
    </source>
</reference>
<reference evidence="6" key="2">
    <citation type="journal article" date="2015" name="Biochem. J.">
        <title>The purification and characterization of ATP synthase complexes from the mitochondria of four fungal species.</title>
        <authorList>
            <person name="Liu S."/>
            <person name="Charlesworth T.J."/>
            <person name="Bason J.V."/>
            <person name="Montgomery M.G."/>
            <person name="Harbour M.E."/>
            <person name="Fearnley I.M."/>
            <person name="Walker J.E."/>
        </authorList>
    </citation>
    <scope>IDENTIFICATION IN ATP SYNTHASE COMPLEX</scope>
    <scope>FUNCTION OF ATP SYNTHASE COMPLEX</scope>
    <scope>SUBUNIT</scope>
    <scope>SUBCELLULAR LOCATION</scope>
    <scope>MASS SPECTROMETRY</scope>
    <scope>IDENTIFICATION BY MASS SPECTROMETRY</scope>
    <source>
        <strain evidence="5">CLIB 122 / E 150</strain>
    </source>
</reference>
<reference evidence="6" key="3">
    <citation type="journal article" date="2016" name="Mol. Cell">
        <title>Structure of a Complete ATP Synthase Dimer Reveals the Molecular Basis of Inner Mitochondrial Membrane Morphology.</title>
        <authorList>
            <person name="Hahn A."/>
            <person name="Parey K."/>
            <person name="Bublitz M."/>
            <person name="Mills D.J."/>
            <person name="Zickermann V."/>
            <person name="Vonck J."/>
            <person name="Kuehlbrandt W."/>
            <person name="Meier T."/>
        </authorList>
    </citation>
    <scope>STRUCTURE BY ELECTRON MICROSCOPY (7.7 ANGSTROMS) OF DIMERIC ATP SYNTHASE COMPLEX</scope>
    <scope>FUNCTION</scope>
    <scope>SUBUNIT</scope>
    <scope>SUBCELLULAR LOCATION</scope>
    <scope>MEMBRANE TOPOLOGY</scope>
    <scope>IDENTIFICATION BY MASS SPECTROMETRY</scope>
</reference>
<feature type="transit peptide" description="Mitochondrion" evidence="3">
    <location>
        <begin position="1"/>
        <end position="14"/>
    </location>
</feature>
<feature type="chain" id="PRO_0000445316" description="ATP synthase subunit 4, mitochondrial" evidence="6">
    <location>
        <begin position="15"/>
        <end position="217"/>
    </location>
</feature>
<feature type="transmembrane region" description="Helical" evidence="2">
    <location>
        <begin position="41"/>
        <end position="61"/>
    </location>
</feature>
<feature type="transmembrane region" description="Helical" evidence="2">
    <location>
        <begin position="66"/>
        <end position="86"/>
    </location>
</feature>
<name>ATPF_YARLI</name>
<evidence type="ECO:0000250" key="1">
    <source>
        <dbReference type="UniProtKB" id="P05626"/>
    </source>
</evidence>
<evidence type="ECO:0000255" key="2"/>
<evidence type="ECO:0000269" key="3">
    <source>
    </source>
</evidence>
<evidence type="ECO:0000269" key="4">
    <source>
    </source>
</evidence>
<evidence type="ECO:0000303" key="5">
    <source>
    </source>
</evidence>
<evidence type="ECO:0000305" key="6"/>
<evidence type="ECO:0000305" key="7">
    <source>
    </source>
</evidence>
<evidence type="ECO:0000312" key="8">
    <source>
        <dbReference type="EMBL" id="CAG78466.1"/>
    </source>
</evidence>
<evidence type="ECO:0000312" key="9">
    <source>
        <dbReference type="Proteomes" id="UP000001300"/>
    </source>
</evidence>
<accession>Q6C105</accession>
<proteinExistence type="evidence at protein level"/>
<keyword id="KW-0066">ATP synthesis</keyword>
<keyword id="KW-0138">CF(0)</keyword>
<keyword id="KW-0375">Hydrogen ion transport</keyword>
<keyword id="KW-0406">Ion transport</keyword>
<keyword id="KW-0472">Membrane</keyword>
<keyword id="KW-0496">Mitochondrion</keyword>
<keyword id="KW-0999">Mitochondrion inner membrane</keyword>
<keyword id="KW-1185">Reference proteome</keyword>
<keyword id="KW-0809">Transit peptide</keyword>
<keyword id="KW-0812">Transmembrane</keyword>
<keyword id="KW-1133">Transmembrane helix</keyword>
<keyword id="KW-0813">Transport</keyword>
<protein>
    <recommendedName>
        <fullName evidence="1">ATP synthase subunit 4, mitochondrial</fullName>
    </recommendedName>
    <alternativeName>
        <fullName evidence="5">ATP synthase subunit b</fullName>
    </alternativeName>
</protein>
<dbReference type="EMBL" id="CR382132">
    <property type="protein sequence ID" value="CAG78466.1"/>
    <property type="molecule type" value="Genomic_DNA"/>
</dbReference>
<dbReference type="RefSeq" id="XP_505657.1">
    <property type="nucleotide sequence ID" value="XM_505657.1"/>
</dbReference>
<dbReference type="SMR" id="Q6C105"/>
<dbReference type="FunCoup" id="Q6C105">
    <property type="interactions" value="484"/>
</dbReference>
<dbReference type="STRING" id="284591.Q6C105"/>
<dbReference type="EnsemblFungi" id="CAG78466">
    <property type="protein sequence ID" value="CAG78466"/>
    <property type="gene ID" value="YALI0_F20306g"/>
</dbReference>
<dbReference type="KEGG" id="yli:2907796"/>
<dbReference type="VEuPathDB" id="FungiDB:YALI0_F20306g"/>
<dbReference type="HOGENOM" id="CLU_077208_0_0_1"/>
<dbReference type="InParanoid" id="Q6C105"/>
<dbReference type="OMA" id="YTEWADG"/>
<dbReference type="OrthoDB" id="1276at4891"/>
<dbReference type="Proteomes" id="UP000001300">
    <property type="component" value="Chromosome F"/>
</dbReference>
<dbReference type="GO" id="GO:0005743">
    <property type="term" value="C:mitochondrial inner membrane"/>
    <property type="evidence" value="ECO:0007669"/>
    <property type="project" value="UniProtKB-SubCell"/>
</dbReference>
<dbReference type="GO" id="GO:0045259">
    <property type="term" value="C:proton-transporting ATP synthase complex"/>
    <property type="evidence" value="ECO:0007669"/>
    <property type="project" value="UniProtKB-KW"/>
</dbReference>
<dbReference type="GO" id="GO:0046933">
    <property type="term" value="F:proton-transporting ATP synthase activity, rotational mechanism"/>
    <property type="evidence" value="ECO:0007669"/>
    <property type="project" value="EnsemblFungi"/>
</dbReference>
<dbReference type="GO" id="GO:0046961">
    <property type="term" value="F:proton-transporting ATPase activity, rotational mechanism"/>
    <property type="evidence" value="ECO:0007669"/>
    <property type="project" value="EnsemblFungi"/>
</dbReference>
<dbReference type="GO" id="GO:0065003">
    <property type="term" value="P:protein-containing complex assembly"/>
    <property type="evidence" value="ECO:0007669"/>
    <property type="project" value="EnsemblFungi"/>
</dbReference>
<dbReference type="GO" id="GO:0015986">
    <property type="term" value="P:proton motive force-driven ATP synthesis"/>
    <property type="evidence" value="ECO:0000318"/>
    <property type="project" value="GO_Central"/>
</dbReference>
<dbReference type="FunFam" id="1.20.5.2210:FF:000002">
    <property type="entry name" value="ATP synthase subunit 4 mitochondrial"/>
    <property type="match status" value="1"/>
</dbReference>
<dbReference type="Gene3D" id="1.20.5.2210">
    <property type="match status" value="1"/>
</dbReference>
<dbReference type="InterPro" id="IPR008688">
    <property type="entry name" value="ATP_synth_Bsub_B/MI25"/>
</dbReference>
<dbReference type="InterPro" id="IPR013837">
    <property type="entry name" value="ATP_synth_F0_suB"/>
</dbReference>
<dbReference type="PANTHER" id="PTHR12733:SF3">
    <property type="entry name" value="ATP SYNTHASE F(0) COMPLEX SUBUNIT B1, MITOCHONDRIAL"/>
    <property type="match status" value="1"/>
</dbReference>
<dbReference type="PANTHER" id="PTHR12733">
    <property type="entry name" value="MITOCHONDRIAL ATP SYNTHASE B CHAIN"/>
    <property type="match status" value="1"/>
</dbReference>
<dbReference type="Pfam" id="PF05405">
    <property type="entry name" value="Mt_ATP-synt_B"/>
    <property type="match status" value="1"/>
</dbReference>
<dbReference type="SUPFAM" id="SSF161060">
    <property type="entry name" value="ATP synthase B chain-like"/>
    <property type="match status" value="1"/>
</dbReference>
<sequence length="217" mass="24003">MPFARVGALSARHYSNQVDPKVKATSILDSIPGNNVLSKTGVLATGVLGSIYAISNELYIVNDESIVLGVFAAFVVVVAKLGGPGYTSWADGYIENMRNILNTTRDKHTDAVKERIGDVSKLKDVVKTTQDLFAVSKDTVKLEAEVFETKQQVVLAAEAKSVLDSWVRYENSVRQREQKLLTETVISKIEKDLKDPKFQQKILQQSVEDIEKLFAKA</sequence>
<gene>
    <name evidence="1" type="primary">ATP4</name>
    <name evidence="8" type="ordered locus">YALI0_F20306g</name>
</gene>
<organism evidence="9">
    <name type="scientific">Yarrowia lipolytica (strain CLIB 122 / E 150)</name>
    <name type="common">Yeast</name>
    <name type="synonym">Candida lipolytica</name>
    <dbReference type="NCBI Taxonomy" id="284591"/>
    <lineage>
        <taxon>Eukaryota</taxon>
        <taxon>Fungi</taxon>
        <taxon>Dikarya</taxon>
        <taxon>Ascomycota</taxon>
        <taxon>Saccharomycotina</taxon>
        <taxon>Dipodascomycetes</taxon>
        <taxon>Dipodascales</taxon>
        <taxon>Dipodascales incertae sedis</taxon>
        <taxon>Yarrowia</taxon>
    </lineage>
</organism>
<comment type="function">
    <text evidence="3 4">Mitochondrial membrane ATP synthase (F(1)F(0) ATP synthase or Complex V) produces ATP from ADP in the presence of a proton gradient across the membrane which is generated by electron transport complexes of the respiratory chain (PubMed:25759169). F-type ATP synthases consist of two structural domains, F(1) - containing the extramembraneous catalytic core, and F(0) - containing the membrane proton channel, linked together by a central stalk and a peripheral stalk (PubMed:27373333). During catalysis, ATP synthesis in the catalytic domain of F(1) is coupled via a rotary mechanism of the central stalk subunits to proton translocation (PubMed:27373333). Part of the complex F(0) domain and the peripheral stalk, which acts as a stator to hold the catalytic alpha/ATP1(3)beta/ATP2(3) subcomplex and subunit a/ATP6 static relative to the rotary elements (PubMed:27373333).</text>
</comment>
<comment type="subunit">
    <text evidence="3 4">F-type ATP synthases have 2 components, the catalytic core F(1) and the membrane-embedded component F(0), linked together by a central stalk and a peripheral stalk (PubMed:27373333). The central stalk, also called rotor shaft, is often seen as part of F(1) (PubMed:27373333). The peripheral stalk is seen as part of F(0) (PubMed:27373333). F(0) contains the membrane channel next to the rotor (PubMed:27373333). F-type ATP synthases form dimers but each monomer functions independently in ATP generation (PubMed:27373333). The dimer consists of 17 different polypeptides: ATP1 (subunit alpha, 3 molecules per monomer, part of F(1)), ATP2 (subunit beta, 3 copies per monomer, part of F(1)), ATP3 (subunit gamma, part of the central stalk), ATP4 (subunit b, part of the peripheral stalk), ATP5/OSCP (subunit 5/OSCP, part of the peripheral stalk), ATP6 (subunit a, part of the peripheral stalk), ATP7 (subunit d, part of the peripheral stalk), ATP8 (subunit 8, part of the peripheral stalk), OLI1 (subunit c, part of the rotor, 10 molecules per monomer), ATP14 (subunit h, part of the peripheral stalk), ATP15 (subunit epsilon, part of the central stalk), ATP16 (subunit delta, part of the central stalk), ATP17 (subunit f, part of the peripheral stalk), ATP18 (subunit i/j, part of the peripheral stalk), ATP19 (subunit k, dimer-specific, at interface between monomers), ATP20 (subunit g, at interface between monomers), TIM11 (subunit e, at interface between monomers) (PubMed:25759169, PubMed:27373333).</text>
</comment>
<comment type="subcellular location">
    <subcellularLocation>
        <location evidence="7">Mitochondrion inner membrane</location>
        <topology evidence="7">Multi-pass membrane protein</topology>
    </subcellularLocation>
    <text evidence="7">The F-type ATP synthase complex is anchored in the mitochondrial inner membrane via the F(0) domain with the F(1) domain and the peripheral stalk extending into the mitochondrial matrix.</text>
</comment>
<comment type="mass spectrometry" mass="22444.8" method="MALDI" evidence="3"/>
<comment type="similarity">
    <text evidence="6">Belongs to the eukaryotic ATPase B chain family.</text>
</comment>